<accession>B2JZ34</accession>
<proteinExistence type="inferred from homology"/>
<dbReference type="EMBL" id="CP001048">
    <property type="protein sequence ID" value="ACC90078.1"/>
    <property type="molecule type" value="Genomic_DNA"/>
</dbReference>
<dbReference type="RefSeq" id="WP_002221800.1">
    <property type="nucleotide sequence ID" value="NZ_CP009780.1"/>
</dbReference>
<dbReference type="SMR" id="B2JZ34"/>
<dbReference type="GeneID" id="57977517"/>
<dbReference type="KEGG" id="ypb:YPTS_3123"/>
<dbReference type="PATRIC" id="fig|502801.10.peg.2555"/>
<dbReference type="GO" id="GO:0022627">
    <property type="term" value="C:cytosolic small ribosomal subunit"/>
    <property type="evidence" value="ECO:0007669"/>
    <property type="project" value="TreeGrafter"/>
</dbReference>
<dbReference type="GO" id="GO:0003735">
    <property type="term" value="F:structural constituent of ribosome"/>
    <property type="evidence" value="ECO:0007669"/>
    <property type="project" value="InterPro"/>
</dbReference>
<dbReference type="GO" id="GO:0006412">
    <property type="term" value="P:translation"/>
    <property type="evidence" value="ECO:0007669"/>
    <property type="project" value="UniProtKB-UniRule"/>
</dbReference>
<dbReference type="CDD" id="cd01425">
    <property type="entry name" value="RPS2"/>
    <property type="match status" value="1"/>
</dbReference>
<dbReference type="FunFam" id="1.10.287.610:FF:000001">
    <property type="entry name" value="30S ribosomal protein S2"/>
    <property type="match status" value="1"/>
</dbReference>
<dbReference type="Gene3D" id="3.40.50.10490">
    <property type="entry name" value="Glucose-6-phosphate isomerase like protein, domain 1"/>
    <property type="match status" value="1"/>
</dbReference>
<dbReference type="Gene3D" id="1.10.287.610">
    <property type="entry name" value="Helix hairpin bin"/>
    <property type="match status" value="1"/>
</dbReference>
<dbReference type="HAMAP" id="MF_00291_B">
    <property type="entry name" value="Ribosomal_uS2_B"/>
    <property type="match status" value="1"/>
</dbReference>
<dbReference type="InterPro" id="IPR001865">
    <property type="entry name" value="Ribosomal_uS2"/>
</dbReference>
<dbReference type="InterPro" id="IPR005706">
    <property type="entry name" value="Ribosomal_uS2_bac/mit/plastid"/>
</dbReference>
<dbReference type="InterPro" id="IPR018130">
    <property type="entry name" value="Ribosomal_uS2_CS"/>
</dbReference>
<dbReference type="InterPro" id="IPR023591">
    <property type="entry name" value="Ribosomal_uS2_flav_dom_sf"/>
</dbReference>
<dbReference type="NCBIfam" id="TIGR01011">
    <property type="entry name" value="rpsB_bact"/>
    <property type="match status" value="1"/>
</dbReference>
<dbReference type="PANTHER" id="PTHR12534">
    <property type="entry name" value="30S RIBOSOMAL PROTEIN S2 PROKARYOTIC AND ORGANELLAR"/>
    <property type="match status" value="1"/>
</dbReference>
<dbReference type="PANTHER" id="PTHR12534:SF0">
    <property type="entry name" value="SMALL RIBOSOMAL SUBUNIT PROTEIN US2M"/>
    <property type="match status" value="1"/>
</dbReference>
<dbReference type="Pfam" id="PF00318">
    <property type="entry name" value="Ribosomal_S2"/>
    <property type="match status" value="1"/>
</dbReference>
<dbReference type="PRINTS" id="PR00395">
    <property type="entry name" value="RIBOSOMALS2"/>
</dbReference>
<dbReference type="SUPFAM" id="SSF52313">
    <property type="entry name" value="Ribosomal protein S2"/>
    <property type="match status" value="1"/>
</dbReference>
<dbReference type="PROSITE" id="PS00962">
    <property type="entry name" value="RIBOSOMAL_S2_1"/>
    <property type="match status" value="1"/>
</dbReference>
<dbReference type="PROSITE" id="PS00963">
    <property type="entry name" value="RIBOSOMAL_S2_2"/>
    <property type="match status" value="1"/>
</dbReference>
<feature type="chain" id="PRO_1000115079" description="Small ribosomal subunit protein uS2">
    <location>
        <begin position="1"/>
        <end position="241"/>
    </location>
</feature>
<keyword id="KW-0687">Ribonucleoprotein</keyword>
<keyword id="KW-0689">Ribosomal protein</keyword>
<sequence length="241" mass="26841">MATVSMRDMLQAGVHFGHQTRYWNPKMKPFIFGARNKVHIINLEKTVPMFNEALAELTKISSRKGKILFVGTKRAASEAVKEAANNCDQFFVNHRWLGGMLTNWKTVRQSIKRLKDLEIQSQDGTFDKLTKKEALMRTRELNKLENSLGGIKDMGGLPDALFVVDADHEHIAIKEANNLGIPVFSIVDTNSDPDGVDFIIPGNDDAIRAVKLYLGAVATAVREGRSQDLAVQAEESFVEAE</sequence>
<gene>
    <name evidence="1" type="primary">rpsB</name>
    <name type="ordered locus">YPTS_3123</name>
</gene>
<evidence type="ECO:0000255" key="1">
    <source>
        <dbReference type="HAMAP-Rule" id="MF_00291"/>
    </source>
</evidence>
<evidence type="ECO:0000305" key="2"/>
<protein>
    <recommendedName>
        <fullName evidence="1">Small ribosomal subunit protein uS2</fullName>
    </recommendedName>
    <alternativeName>
        <fullName evidence="2">30S ribosomal protein S2</fullName>
    </alternativeName>
</protein>
<comment type="similarity">
    <text evidence="1">Belongs to the universal ribosomal protein uS2 family.</text>
</comment>
<name>RS2_YERPB</name>
<organism>
    <name type="scientific">Yersinia pseudotuberculosis serotype IB (strain PB1/+)</name>
    <dbReference type="NCBI Taxonomy" id="502801"/>
    <lineage>
        <taxon>Bacteria</taxon>
        <taxon>Pseudomonadati</taxon>
        <taxon>Pseudomonadota</taxon>
        <taxon>Gammaproteobacteria</taxon>
        <taxon>Enterobacterales</taxon>
        <taxon>Yersiniaceae</taxon>
        <taxon>Yersinia</taxon>
    </lineage>
</organism>
<reference key="1">
    <citation type="submission" date="2008-04" db="EMBL/GenBank/DDBJ databases">
        <title>Complete sequence of Yersinia pseudotuberculosis PB1/+.</title>
        <authorList>
            <person name="Copeland A."/>
            <person name="Lucas S."/>
            <person name="Lapidus A."/>
            <person name="Glavina del Rio T."/>
            <person name="Dalin E."/>
            <person name="Tice H."/>
            <person name="Bruce D."/>
            <person name="Goodwin L."/>
            <person name="Pitluck S."/>
            <person name="Munk A.C."/>
            <person name="Brettin T."/>
            <person name="Detter J.C."/>
            <person name="Han C."/>
            <person name="Tapia R."/>
            <person name="Schmutz J."/>
            <person name="Larimer F."/>
            <person name="Land M."/>
            <person name="Hauser L."/>
            <person name="Challacombe J.F."/>
            <person name="Green L."/>
            <person name="Lindler L.E."/>
            <person name="Nikolich M.P."/>
            <person name="Richardson P."/>
        </authorList>
    </citation>
    <scope>NUCLEOTIDE SEQUENCE [LARGE SCALE GENOMIC DNA]</scope>
    <source>
        <strain>PB1/+</strain>
    </source>
</reference>